<sequence length="96" mass="10990">MVVKIRLARHGVRNRPFYHIVVANAWKAPQAKPIETIGTFDPIPKKIDSQDSIPRIKDIQLNVERFKYWISVGAQPSDTVRSLAEKFQLLPKKPVS</sequence>
<feature type="chain" id="PRO_0000167325" description="Small ribosomal subunit protein bS16m">
    <location>
        <begin position="1"/>
        <end position="96"/>
    </location>
</feature>
<proteinExistence type="inferred from homology"/>
<gene>
    <name type="primary">mrps16</name>
    <name type="ORF">SPBC354.06</name>
</gene>
<name>RT16_SCHPO</name>
<comment type="function">
    <text evidence="1">Component of the mitochondrial ribosome (mitoribosome), a dedicated translation machinery responsible for the synthesis of mitochondrial genome-encoded proteins, including at least some of the essential transmembrane subunits of the mitochondrial respiratory chain. The mitoribosomes are attached to the mitochondrial inner membrane and translation products are cotranslationally integrated into the membrane.</text>
</comment>
<comment type="subunit">
    <text evidence="1">Component of the mitochondrial small ribosomal subunit (mt-SSU). Mature yeast 74S mitochondrial ribosomes consist of a small (37S) and a large (54S) subunit. The 37S small subunit contains a 15S ribosomal RNA (15S mt-rRNA) and at least 32 different proteins. The 54S large subunit contains a 21S rRNA (21S mt-rRNA) and at least 45 different proteins.</text>
</comment>
<comment type="subcellular location">
    <subcellularLocation>
        <location evidence="1">Mitochondrion</location>
    </subcellularLocation>
</comment>
<comment type="similarity">
    <text evidence="2">Belongs to the bacterial ribosomal protein bS16 family.</text>
</comment>
<evidence type="ECO:0000250" key="1">
    <source>
        <dbReference type="UniProtKB" id="Q02608"/>
    </source>
</evidence>
<evidence type="ECO:0000305" key="2"/>
<accession>O43020</accession>
<reference key="1">
    <citation type="journal article" date="2002" name="Nature">
        <title>The genome sequence of Schizosaccharomyces pombe.</title>
        <authorList>
            <person name="Wood V."/>
            <person name="Gwilliam R."/>
            <person name="Rajandream M.A."/>
            <person name="Lyne M.H."/>
            <person name="Lyne R."/>
            <person name="Stewart A."/>
            <person name="Sgouros J.G."/>
            <person name="Peat N."/>
            <person name="Hayles J."/>
            <person name="Baker S.G."/>
            <person name="Basham D."/>
            <person name="Bowman S."/>
            <person name="Brooks K."/>
            <person name="Brown D."/>
            <person name="Brown S."/>
            <person name="Chillingworth T."/>
            <person name="Churcher C.M."/>
            <person name="Collins M."/>
            <person name="Connor R."/>
            <person name="Cronin A."/>
            <person name="Davis P."/>
            <person name="Feltwell T."/>
            <person name="Fraser A."/>
            <person name="Gentles S."/>
            <person name="Goble A."/>
            <person name="Hamlin N."/>
            <person name="Harris D.E."/>
            <person name="Hidalgo J."/>
            <person name="Hodgson G."/>
            <person name="Holroyd S."/>
            <person name="Hornsby T."/>
            <person name="Howarth S."/>
            <person name="Huckle E.J."/>
            <person name="Hunt S."/>
            <person name="Jagels K."/>
            <person name="James K.D."/>
            <person name="Jones L."/>
            <person name="Jones M."/>
            <person name="Leather S."/>
            <person name="McDonald S."/>
            <person name="McLean J."/>
            <person name="Mooney P."/>
            <person name="Moule S."/>
            <person name="Mungall K.L."/>
            <person name="Murphy L.D."/>
            <person name="Niblett D."/>
            <person name="Odell C."/>
            <person name="Oliver K."/>
            <person name="O'Neil S."/>
            <person name="Pearson D."/>
            <person name="Quail M.A."/>
            <person name="Rabbinowitsch E."/>
            <person name="Rutherford K.M."/>
            <person name="Rutter S."/>
            <person name="Saunders D."/>
            <person name="Seeger K."/>
            <person name="Sharp S."/>
            <person name="Skelton J."/>
            <person name="Simmonds M.N."/>
            <person name="Squares R."/>
            <person name="Squares S."/>
            <person name="Stevens K."/>
            <person name="Taylor K."/>
            <person name="Taylor R.G."/>
            <person name="Tivey A."/>
            <person name="Walsh S.V."/>
            <person name="Warren T."/>
            <person name="Whitehead S."/>
            <person name="Woodward J.R."/>
            <person name="Volckaert G."/>
            <person name="Aert R."/>
            <person name="Robben J."/>
            <person name="Grymonprez B."/>
            <person name="Weltjens I."/>
            <person name="Vanstreels E."/>
            <person name="Rieger M."/>
            <person name="Schaefer M."/>
            <person name="Mueller-Auer S."/>
            <person name="Gabel C."/>
            <person name="Fuchs M."/>
            <person name="Duesterhoeft A."/>
            <person name="Fritzc C."/>
            <person name="Holzer E."/>
            <person name="Moestl D."/>
            <person name="Hilbert H."/>
            <person name="Borzym K."/>
            <person name="Langer I."/>
            <person name="Beck A."/>
            <person name="Lehrach H."/>
            <person name="Reinhardt R."/>
            <person name="Pohl T.M."/>
            <person name="Eger P."/>
            <person name="Zimmermann W."/>
            <person name="Wedler H."/>
            <person name="Wambutt R."/>
            <person name="Purnelle B."/>
            <person name="Goffeau A."/>
            <person name="Cadieu E."/>
            <person name="Dreano S."/>
            <person name="Gloux S."/>
            <person name="Lelaure V."/>
            <person name="Mottier S."/>
            <person name="Galibert F."/>
            <person name="Aves S.J."/>
            <person name="Xiang Z."/>
            <person name="Hunt C."/>
            <person name="Moore K."/>
            <person name="Hurst S.M."/>
            <person name="Lucas M."/>
            <person name="Rochet M."/>
            <person name="Gaillardin C."/>
            <person name="Tallada V.A."/>
            <person name="Garzon A."/>
            <person name="Thode G."/>
            <person name="Daga R.R."/>
            <person name="Cruzado L."/>
            <person name="Jimenez J."/>
            <person name="Sanchez M."/>
            <person name="del Rey F."/>
            <person name="Benito J."/>
            <person name="Dominguez A."/>
            <person name="Revuelta J.L."/>
            <person name="Moreno S."/>
            <person name="Armstrong J."/>
            <person name="Forsburg S.L."/>
            <person name="Cerutti L."/>
            <person name="Lowe T."/>
            <person name="McCombie W.R."/>
            <person name="Paulsen I."/>
            <person name="Potashkin J."/>
            <person name="Shpakovski G.V."/>
            <person name="Ussery D."/>
            <person name="Barrell B.G."/>
            <person name="Nurse P."/>
        </authorList>
    </citation>
    <scope>NUCLEOTIDE SEQUENCE [LARGE SCALE GENOMIC DNA]</scope>
    <source>
        <strain>972 / ATCC 24843</strain>
    </source>
</reference>
<reference key="2">
    <citation type="journal article" date="2011" name="Science">
        <title>Comparative functional genomics of the fission yeasts.</title>
        <authorList>
            <person name="Rhind N."/>
            <person name="Chen Z."/>
            <person name="Yassour M."/>
            <person name="Thompson D.A."/>
            <person name="Haas B.J."/>
            <person name="Habib N."/>
            <person name="Wapinski I."/>
            <person name="Roy S."/>
            <person name="Lin M.F."/>
            <person name="Heiman D.I."/>
            <person name="Young S.K."/>
            <person name="Furuya K."/>
            <person name="Guo Y."/>
            <person name="Pidoux A."/>
            <person name="Chen H.M."/>
            <person name="Robbertse B."/>
            <person name="Goldberg J.M."/>
            <person name="Aoki K."/>
            <person name="Bayne E.H."/>
            <person name="Berlin A.M."/>
            <person name="Desjardins C.A."/>
            <person name="Dobbs E."/>
            <person name="Dukaj L."/>
            <person name="Fan L."/>
            <person name="FitzGerald M.G."/>
            <person name="French C."/>
            <person name="Gujja S."/>
            <person name="Hansen K."/>
            <person name="Keifenheim D."/>
            <person name="Levin J.Z."/>
            <person name="Mosher R.A."/>
            <person name="Mueller C.A."/>
            <person name="Pfiffner J."/>
            <person name="Priest M."/>
            <person name="Russ C."/>
            <person name="Smialowska A."/>
            <person name="Swoboda P."/>
            <person name="Sykes S.M."/>
            <person name="Vaughn M."/>
            <person name="Vengrova S."/>
            <person name="Yoder R."/>
            <person name="Zeng Q."/>
            <person name="Allshire R."/>
            <person name="Baulcombe D."/>
            <person name="Birren B.W."/>
            <person name="Brown W."/>
            <person name="Ekwall K."/>
            <person name="Kellis M."/>
            <person name="Leatherwood J."/>
            <person name="Levin H."/>
            <person name="Margalit H."/>
            <person name="Martienssen R."/>
            <person name="Nieduszynski C.A."/>
            <person name="Spatafora J.W."/>
            <person name="Friedman N."/>
            <person name="Dalgaard J.Z."/>
            <person name="Baumann P."/>
            <person name="Niki H."/>
            <person name="Regev A."/>
            <person name="Nusbaum C."/>
        </authorList>
    </citation>
    <scope>REVISION OF GENE MODEL</scope>
</reference>
<protein>
    <recommendedName>
        <fullName evidence="2">Small ribosomal subunit protein bS16m</fullName>
    </recommendedName>
    <alternativeName>
        <fullName>37S ribosomal protein S16, mitochondrial</fullName>
    </alternativeName>
</protein>
<dbReference type="EMBL" id="CU329671">
    <property type="protein sequence ID" value="CAA17806.2"/>
    <property type="molecule type" value="Genomic_DNA"/>
</dbReference>
<dbReference type="PIR" id="T40286">
    <property type="entry name" value="T40286"/>
</dbReference>
<dbReference type="RefSeq" id="NP_595230.2">
    <property type="nucleotide sequence ID" value="NM_001021136.2"/>
</dbReference>
<dbReference type="SMR" id="O43020"/>
<dbReference type="ComplexPortal" id="CPX-10315">
    <property type="entry name" value="37S mitochondrial small ribosomal subunit"/>
</dbReference>
<dbReference type="FunCoup" id="O43020">
    <property type="interactions" value="385"/>
</dbReference>
<dbReference type="STRING" id="284812.O43020"/>
<dbReference type="PaxDb" id="4896-SPBC354.06.1"/>
<dbReference type="EnsemblFungi" id="SPBC354.06.1">
    <property type="protein sequence ID" value="SPBC354.06.1:pep"/>
    <property type="gene ID" value="SPBC354.06"/>
</dbReference>
<dbReference type="GeneID" id="2541005"/>
<dbReference type="KEGG" id="spo:2541005"/>
<dbReference type="PomBase" id="SPBC354.06">
    <property type="gene designation" value="mrps16"/>
</dbReference>
<dbReference type="VEuPathDB" id="FungiDB:SPBC354.06"/>
<dbReference type="eggNOG" id="KOG3419">
    <property type="taxonomic scope" value="Eukaryota"/>
</dbReference>
<dbReference type="HOGENOM" id="CLU_100590_2_2_1"/>
<dbReference type="InParanoid" id="O43020"/>
<dbReference type="OMA" id="GFYNPIA"/>
<dbReference type="PRO" id="PR:O43020"/>
<dbReference type="Proteomes" id="UP000002485">
    <property type="component" value="Chromosome II"/>
</dbReference>
<dbReference type="GO" id="GO:0005763">
    <property type="term" value="C:mitochondrial small ribosomal subunit"/>
    <property type="evidence" value="ECO:0000318"/>
    <property type="project" value="GO_Central"/>
</dbReference>
<dbReference type="GO" id="GO:0003735">
    <property type="term" value="F:structural constituent of ribosome"/>
    <property type="evidence" value="ECO:0000318"/>
    <property type="project" value="GO_Central"/>
</dbReference>
<dbReference type="GO" id="GO:0032543">
    <property type="term" value="P:mitochondrial translation"/>
    <property type="evidence" value="ECO:0000250"/>
    <property type="project" value="PomBase"/>
</dbReference>
<dbReference type="Gene3D" id="3.30.1320.10">
    <property type="match status" value="1"/>
</dbReference>
<dbReference type="HAMAP" id="MF_00385">
    <property type="entry name" value="Ribosomal_bS16"/>
    <property type="match status" value="1"/>
</dbReference>
<dbReference type="InterPro" id="IPR000307">
    <property type="entry name" value="Ribosomal_bS16"/>
</dbReference>
<dbReference type="InterPro" id="IPR023803">
    <property type="entry name" value="Ribosomal_bS16_dom_sf"/>
</dbReference>
<dbReference type="NCBIfam" id="TIGR00002">
    <property type="entry name" value="S16"/>
    <property type="match status" value="1"/>
</dbReference>
<dbReference type="PANTHER" id="PTHR12919">
    <property type="entry name" value="30S RIBOSOMAL PROTEIN S16"/>
    <property type="match status" value="1"/>
</dbReference>
<dbReference type="PANTHER" id="PTHR12919:SF20">
    <property type="entry name" value="SMALL RIBOSOMAL SUBUNIT PROTEIN BS16M"/>
    <property type="match status" value="1"/>
</dbReference>
<dbReference type="Pfam" id="PF00886">
    <property type="entry name" value="Ribosomal_S16"/>
    <property type="match status" value="1"/>
</dbReference>
<dbReference type="SUPFAM" id="SSF54565">
    <property type="entry name" value="Ribosomal protein S16"/>
    <property type="match status" value="1"/>
</dbReference>
<organism>
    <name type="scientific">Schizosaccharomyces pombe (strain 972 / ATCC 24843)</name>
    <name type="common">Fission yeast</name>
    <dbReference type="NCBI Taxonomy" id="284812"/>
    <lineage>
        <taxon>Eukaryota</taxon>
        <taxon>Fungi</taxon>
        <taxon>Dikarya</taxon>
        <taxon>Ascomycota</taxon>
        <taxon>Taphrinomycotina</taxon>
        <taxon>Schizosaccharomycetes</taxon>
        <taxon>Schizosaccharomycetales</taxon>
        <taxon>Schizosaccharomycetaceae</taxon>
        <taxon>Schizosaccharomyces</taxon>
    </lineage>
</organism>
<keyword id="KW-0496">Mitochondrion</keyword>
<keyword id="KW-1185">Reference proteome</keyword>
<keyword id="KW-0687">Ribonucleoprotein</keyword>
<keyword id="KW-0689">Ribosomal protein</keyword>